<evidence type="ECO:0000255" key="1">
    <source>
        <dbReference type="HAMAP-Rule" id="MF_04032"/>
    </source>
</evidence>
<evidence type="ECO:0000256" key="2">
    <source>
        <dbReference type="SAM" id="MobiDB-lite"/>
    </source>
</evidence>
<evidence type="ECO:0000305" key="3"/>
<organism>
    <name type="scientific">Infectious laryngotracheitis virus (strain SA-2)</name>
    <name type="common">ILTV</name>
    <name type="synonym">Gallid herpesvirus 1</name>
    <dbReference type="NCBI Taxonomy" id="10343"/>
    <lineage>
        <taxon>Viruses</taxon>
        <taxon>Duplodnaviria</taxon>
        <taxon>Heunggongvirae</taxon>
        <taxon>Peploviricota</taxon>
        <taxon>Herviviricetes</taxon>
        <taxon>Herpesvirales</taxon>
        <taxon>Orthoherpesviridae</taxon>
        <taxon>Alphaherpesvirinae</taxon>
        <taxon>Iltovirus</taxon>
        <taxon>Iltovirus gallidalpha1</taxon>
        <taxon>Infectious laryngotracheitis virus</taxon>
    </lineage>
</organism>
<protein>
    <recommendedName>
        <fullName evidence="1">Envelope glycoprotein B</fullName>
        <shortName evidence="1">gB</shortName>
    </recommendedName>
</protein>
<proteinExistence type="inferred from homology"/>
<reference key="1">
    <citation type="journal article" date="1991" name="Virology">
        <title>Nucleotide sequence of the gene encoding infectious laryngotracheitis virus glycoprotein B.</title>
        <authorList>
            <person name="Kongsuwan K."/>
            <person name="Prideaux C.T."/>
            <person name="Johnson M.A."/>
            <person name="Sheppard M."/>
            <person name="Fahey K.J."/>
        </authorList>
    </citation>
    <scope>NUCLEOTIDE SEQUENCE [GENOMIC DNA]</scope>
</reference>
<comment type="function">
    <text evidence="1">Envelope glycoprotein that forms spikes at the surface of virion envelope. Essential for the initial attachment to heparan sulfate moieties of the host cell surface proteoglycans. Involved in fusion of viral and cellular membranes leading to virus entry into the host cell. Following initial binding to its host receptors, membrane fusion is mediated by the fusion machinery composed at least of gB and the heterodimer gH/gL. May be involved in the fusion between the virion envelope and the outer nuclear membrane during virion egress.</text>
</comment>
<comment type="subunit">
    <text evidence="1">Homotrimer; disulfide-linked. Binds to heparan sulfate proteoglycans. Interacts with gH/gL heterodimer.</text>
</comment>
<comment type="subcellular location">
    <subcellularLocation>
        <location evidence="1">Virion membrane</location>
        <topology evidence="1">Single-pass type I membrane protein</topology>
    </subcellularLocation>
    <subcellularLocation>
        <location evidence="1">Host cell membrane</location>
        <topology evidence="1">Single-pass type I membrane protein</topology>
    </subcellularLocation>
    <subcellularLocation>
        <location evidence="1">Host endosome membrane</location>
        <topology evidence="1">Single-pass type I membrane protein</topology>
    </subcellularLocation>
    <subcellularLocation>
        <location evidence="1">Host Golgi apparatus membrane</location>
        <topology evidence="1">Single-pass type I membrane protein</topology>
    </subcellularLocation>
    <text evidence="1">During virion morphogenesis, this protein probably accumulates in the endosomes and trans-Golgi where secondary envelopment occurs. It is probably transported to the cell surface from where it is endocytosed and directed to the trans-Golgi network (TGN).</text>
</comment>
<comment type="PTM">
    <text evidence="3">A proteolytic cleavage by host furin generates two subunits that remain linked by disulfide bonds.</text>
</comment>
<comment type="similarity">
    <text evidence="1">Belongs to the herpesviridae glycoprotein B family.</text>
</comment>
<name>GB_ILTVS</name>
<organismHost>
    <name type="scientific">Gallus gallus</name>
    <name type="common">Chicken</name>
    <dbReference type="NCBI Taxonomy" id="9031"/>
</organismHost>
<sequence length="883" mass="100143">MQSYIAVNIDMASLKMLICVCVAILIPSTLSQDSHGIGWNNSPHDTASMDVGKISFSEAIGSGAPKEPQIRNRIFACSSPTGASVARLAQPRHCHRHADSTNMTEGIAVVFKQNIAPYVFNVTLYYKHITTVTTWALFSRPQITNEYVTRVPIDYHEIVRIDRSGECSSKATYHKNFMFFEAYDNDEAEKKLPLVPSLLRSTVSKAFHTTNFTKRHQTLGYRTSTSVDCVVEYLQARSVYPYDYFGMATGDTVEISPFYTKNTTGPRRHSVYRDYRFLEIANYQVRDLETGQIRPPKKRNFLTDEQFTIGWDAMEEKESVCTLSKWIEVPEAVRVSYKNSYHFSLKDMTMTFSSGKQPFNISRLHLAECVPTIASEAIDGIFARKYSSTHVRSGDIEYYLGSGGFLIAFQKLMSHGLAEMYLEEAQRQNHLPRGRERRQAAGRRTASLQSGPQGDRITTHSSATFAMLQFAYDKIQAHVNELIGNLLEAWCELQNRQLIVWHEMKKLNPNSLMTSLFGQPVSARLLGDIVAVSKCIEIPIENIRMQDSMRVPGDPTMCYTRPVLIFRYSSSPESQFSANSTENHNLGILGQLGEHNEILQGRNLIEPCMINHRRYFLLGENYLLYEDYTFVRQVNASEIEEVSTFINLNATILEDLDFVPVEVYTREELRDTGTLNYDDVVRYQNIYNKRFRDIDTVIRGDRGDAIFRAIADFFGNTLGEVGKALGTVVMTAAAAVISTVSGIASFLSNPFAALAIGIAVVVSIILGLLAFKYVMNLKSNPVQVLFPGAVPPAGTPPRPSRRYYKDEEEVEEDSDEDDRILATRVLKGLELLHKDEQKARRQKARFSAFAKNMRNLFRRKPRTKEDDYPLLEYPSWAEESEDE</sequence>
<dbReference type="EMBL" id="M64927">
    <property type="protein sequence ID" value="AAA88009.1"/>
    <property type="status" value="ALT_SEQ"/>
    <property type="molecule type" value="Genomic_DNA"/>
</dbReference>
<dbReference type="PIR" id="A40567">
    <property type="entry name" value="VGBEIS"/>
</dbReference>
<dbReference type="SMR" id="P27415"/>
<dbReference type="GlyCosmos" id="P27415">
    <property type="glycosylation" value="8 sites, No reported glycans"/>
</dbReference>
<dbReference type="GO" id="GO:0044175">
    <property type="term" value="C:host cell endosome membrane"/>
    <property type="evidence" value="ECO:0007669"/>
    <property type="project" value="UniProtKB-SubCell"/>
</dbReference>
<dbReference type="GO" id="GO:0044178">
    <property type="term" value="C:host cell Golgi membrane"/>
    <property type="evidence" value="ECO:0007669"/>
    <property type="project" value="UniProtKB-SubCell"/>
</dbReference>
<dbReference type="GO" id="GO:0020002">
    <property type="term" value="C:host cell plasma membrane"/>
    <property type="evidence" value="ECO:0007669"/>
    <property type="project" value="UniProtKB-SubCell"/>
</dbReference>
<dbReference type="GO" id="GO:0016020">
    <property type="term" value="C:membrane"/>
    <property type="evidence" value="ECO:0007669"/>
    <property type="project" value="UniProtKB-KW"/>
</dbReference>
<dbReference type="GO" id="GO:0019031">
    <property type="term" value="C:viral envelope"/>
    <property type="evidence" value="ECO:0007669"/>
    <property type="project" value="UniProtKB-KW"/>
</dbReference>
<dbReference type="GO" id="GO:0055036">
    <property type="term" value="C:virion membrane"/>
    <property type="evidence" value="ECO:0007669"/>
    <property type="project" value="UniProtKB-SubCell"/>
</dbReference>
<dbReference type="GO" id="GO:0046718">
    <property type="term" value="P:symbiont entry into host cell"/>
    <property type="evidence" value="ECO:0007669"/>
    <property type="project" value="UniProtKB-KW"/>
</dbReference>
<dbReference type="GO" id="GO:0019062">
    <property type="term" value="P:virion attachment to host cell"/>
    <property type="evidence" value="ECO:0007669"/>
    <property type="project" value="UniProtKB-KW"/>
</dbReference>
<dbReference type="Gene3D" id="1.20.5.1890">
    <property type="match status" value="1"/>
</dbReference>
<dbReference type="Gene3D" id="2.30.29.100">
    <property type="match status" value="1"/>
</dbReference>
<dbReference type="Gene3D" id="2.30.30.1230">
    <property type="match status" value="1"/>
</dbReference>
<dbReference type="Gene3D" id="6.10.250.3280">
    <property type="match status" value="1"/>
</dbReference>
<dbReference type="HAMAP" id="MF_04032">
    <property type="entry name" value="HSV_GB"/>
    <property type="match status" value="1"/>
</dbReference>
<dbReference type="InterPro" id="IPR035377">
    <property type="entry name" value="Glycoprot_B_PH1"/>
</dbReference>
<dbReference type="InterPro" id="IPR035381">
    <property type="entry name" value="Glycoprot_B_PH2"/>
</dbReference>
<dbReference type="InterPro" id="IPR038631">
    <property type="entry name" value="Glycoprot_B_PH2_sf"/>
</dbReference>
<dbReference type="InterPro" id="IPR055341">
    <property type="entry name" value="Glycoprotein_B_ecto_C"/>
</dbReference>
<dbReference type="InterPro" id="IPR000234">
    <property type="entry name" value="Herpes_Glycoprot_B"/>
</dbReference>
<dbReference type="Pfam" id="PF17416">
    <property type="entry name" value="Glycoprot_B_PH1"/>
    <property type="match status" value="1"/>
</dbReference>
<dbReference type="Pfam" id="PF17417">
    <property type="entry name" value="Glycoprot_B_PH2"/>
    <property type="match status" value="1"/>
</dbReference>
<dbReference type="Pfam" id="PF00606">
    <property type="entry name" value="Glycoprotein_B"/>
    <property type="match status" value="1"/>
</dbReference>
<dbReference type="SUPFAM" id="SSF161008">
    <property type="entry name" value="Viral glycoprotein ectodomain-like"/>
    <property type="match status" value="1"/>
</dbReference>
<feature type="signal peptide" evidence="1">
    <location>
        <begin position="1"/>
        <end position="31"/>
    </location>
</feature>
<feature type="chain" id="PRO_0000038178" description="Envelope glycoprotein B" evidence="1">
    <location>
        <begin position="32"/>
        <end position="883"/>
    </location>
</feature>
<feature type="topological domain" description="Virion surface" evidence="1">
    <location>
        <begin position="32"/>
        <end position="750"/>
    </location>
</feature>
<feature type="transmembrane region" description="Helical" evidence="1">
    <location>
        <begin position="751"/>
        <end position="771"/>
    </location>
</feature>
<feature type="topological domain" description="Intravirion" evidence="1">
    <location>
        <begin position="772"/>
        <end position="883"/>
    </location>
</feature>
<feature type="region of interest" description="Involved in fusion and/or binding to host membrane" evidence="1">
    <location>
        <begin position="134"/>
        <end position="140"/>
    </location>
</feature>
<feature type="region of interest" description="Involved in fusion and/or binding to host membrane" evidence="1">
    <location>
        <begin position="216"/>
        <end position="223"/>
    </location>
</feature>
<feature type="region of interest" description="Disordered" evidence="2">
    <location>
        <begin position="428"/>
        <end position="457"/>
    </location>
</feature>
<feature type="region of interest" description="Hydrophobic membrane proximal region" evidence="1">
    <location>
        <begin position="694"/>
        <end position="748"/>
    </location>
</feature>
<feature type="region of interest" description="Hydrophobic membrane proximal region">
    <location>
        <begin position="724"/>
        <end position="744"/>
    </location>
</feature>
<feature type="region of interest" description="Disordered" evidence="2">
    <location>
        <begin position="791"/>
        <end position="817"/>
    </location>
</feature>
<feature type="short sequence motif" description="Internalization motif" evidence="1">
    <location>
        <begin position="868"/>
        <end position="871"/>
    </location>
</feature>
<feature type="compositionally biased region" description="Acidic residues" evidence="2">
    <location>
        <begin position="806"/>
        <end position="817"/>
    </location>
</feature>
<feature type="glycosylation site" description="N-linked (GlcNAc...) asparagine; by host" evidence="1">
    <location>
        <position position="102"/>
    </location>
</feature>
<feature type="glycosylation site" description="N-linked (GlcNAc...) asparagine; by host" evidence="1">
    <location>
        <position position="121"/>
    </location>
</feature>
<feature type="glycosylation site" description="N-linked (GlcNAc...) asparagine; by host" evidence="1">
    <location>
        <position position="211"/>
    </location>
</feature>
<feature type="glycosylation site" description="N-linked (GlcNAc...) asparagine; by host" evidence="1">
    <location>
        <position position="262"/>
    </location>
</feature>
<feature type="glycosylation site" description="N-linked (GlcNAc...) asparagine; by host" evidence="1">
    <location>
        <position position="360"/>
    </location>
</feature>
<feature type="glycosylation site" description="N-linked (GlcNAc...) asparagine; by host" evidence="1">
    <location>
        <position position="579"/>
    </location>
</feature>
<feature type="glycosylation site" description="N-linked (GlcNAc...) asparagine; by host" evidence="1">
    <location>
        <position position="635"/>
    </location>
</feature>
<feature type="glycosylation site" description="N-linked (GlcNAc...) asparagine; by host" evidence="1">
    <location>
        <position position="649"/>
    </location>
</feature>
<feature type="disulfide bond" evidence="1">
    <location>
        <begin position="77"/>
        <end position="535"/>
    </location>
</feature>
<feature type="disulfide bond" evidence="1">
    <location>
        <begin position="94"/>
        <end position="491"/>
    </location>
</feature>
<feature type="disulfide bond" evidence="1">
    <location>
        <begin position="167"/>
        <end position="229"/>
    </location>
</feature>
<feature type="disulfide bond" evidence="1">
    <location>
        <begin position="321"/>
        <end position="369"/>
    </location>
</feature>
<feature type="disulfide bond" evidence="1">
    <location>
        <begin position="558"/>
        <end position="608"/>
    </location>
</feature>
<gene>
    <name evidence="1" type="primary">gB</name>
</gene>
<keyword id="KW-1015">Disulfide bond</keyword>
<keyword id="KW-0325">Glycoprotein</keyword>
<keyword id="KW-1032">Host cell membrane</keyword>
<keyword id="KW-1039">Host endosome</keyword>
<keyword id="KW-1040">Host Golgi apparatus</keyword>
<keyword id="KW-1043">Host membrane</keyword>
<keyword id="KW-0945">Host-virus interaction</keyword>
<keyword id="KW-0472">Membrane</keyword>
<keyword id="KW-0732">Signal</keyword>
<keyword id="KW-0812">Transmembrane</keyword>
<keyword id="KW-1133">Transmembrane helix</keyword>
<keyword id="KW-1161">Viral attachment to host cell</keyword>
<keyword id="KW-0261">Viral envelope protein</keyword>
<keyword id="KW-0946">Virion</keyword>
<keyword id="KW-1160">Virus entry into host cell</keyword>
<accession>P27415</accession>